<sequence>MATYAAFKHVELYNVGKAKKRVLRAPGGVSSDIFGADMPQTPRNVKNLMASNIFSAEKDVAQKNNVRQGAHRFYFMGDVPRRGQKPVDSYSRLFGEPTRPFTPGKNHMKSNILNVGQNSNTAQLISNSKGNYNGKSGSVSSASSSVSSSTENLKINGGIRSEGNPVTGEGYKPGATDYIQPANNGSSQVINKNRVPPGGYSSGLW</sequence>
<accession>B4M5L0</accession>
<comment type="function">
    <text evidence="1">Binds to all microtubule populations.</text>
</comment>
<comment type="subcellular location">
    <subcellularLocation>
        <location evidence="1">Nucleus</location>
    </subcellularLocation>
    <subcellularLocation>
        <location evidence="1">Cytoplasm</location>
    </subcellularLocation>
    <subcellularLocation>
        <location evidence="1">Cytoplasm</location>
        <location evidence="1">Cytoskeleton</location>
    </subcellularLocation>
    <subcellularLocation>
        <location evidence="1">Cytoplasm</location>
        <location evidence="1">Cytoskeleton</location>
        <location evidence="1">Spindle</location>
    </subcellularLocation>
</comment>
<comment type="similarity">
    <text evidence="3">Belongs to the MAP Jupiter family.</text>
</comment>
<gene>
    <name evidence="1" type="primary">Jupiter</name>
    <name type="ORF">GJ10600</name>
</gene>
<protein>
    <recommendedName>
        <fullName evidence="1">Microtubule-associated protein Jupiter</fullName>
    </recommendedName>
</protein>
<proteinExistence type="inferred from homology"/>
<keyword id="KW-0963">Cytoplasm</keyword>
<keyword id="KW-0206">Cytoskeleton</keyword>
<keyword id="KW-0493">Microtubule</keyword>
<keyword id="KW-0539">Nucleus</keyword>
<keyword id="KW-0597">Phosphoprotein</keyword>
<keyword id="KW-1185">Reference proteome</keyword>
<feature type="chain" id="PRO_0000355133" description="Microtubule-associated protein Jupiter">
    <location>
        <begin position="1"/>
        <end position="205"/>
    </location>
</feature>
<feature type="region of interest" description="Disordered" evidence="2">
    <location>
        <begin position="124"/>
        <end position="205"/>
    </location>
</feature>
<feature type="compositionally biased region" description="Polar residues" evidence="2">
    <location>
        <begin position="124"/>
        <end position="135"/>
    </location>
</feature>
<feature type="compositionally biased region" description="Low complexity" evidence="2">
    <location>
        <begin position="136"/>
        <end position="149"/>
    </location>
</feature>
<feature type="compositionally biased region" description="Polar residues" evidence="2">
    <location>
        <begin position="181"/>
        <end position="191"/>
    </location>
</feature>
<feature type="modified residue" description="Phosphoserine" evidence="1">
    <location>
        <position position="30"/>
    </location>
</feature>
<feature type="modified residue" description="Phosphothreonine" evidence="1">
    <location>
        <position position="41"/>
    </location>
</feature>
<feature type="modified residue" description="Phosphothreonine" evidence="1">
    <location>
        <position position="98"/>
    </location>
</feature>
<feature type="modified residue" description="Phosphothreonine" evidence="1">
    <location>
        <position position="102"/>
    </location>
</feature>
<feature type="modified residue" description="Phosphoserine" evidence="1">
    <location>
        <position position="138"/>
    </location>
</feature>
<feature type="modified residue" description="Phosphoserine" evidence="1">
    <location>
        <position position="149"/>
    </location>
</feature>
<evidence type="ECO:0000250" key="1">
    <source>
        <dbReference type="UniProtKB" id="Q9I7K0"/>
    </source>
</evidence>
<evidence type="ECO:0000256" key="2">
    <source>
        <dbReference type="SAM" id="MobiDB-lite"/>
    </source>
</evidence>
<evidence type="ECO:0000305" key="3"/>
<evidence type="ECO:0000312" key="4">
    <source>
        <dbReference type="EMBL" id="EDW58936.1"/>
    </source>
</evidence>
<name>JUPIT_DROVI</name>
<organism>
    <name type="scientific">Drosophila virilis</name>
    <name type="common">Fruit fly</name>
    <dbReference type="NCBI Taxonomy" id="7244"/>
    <lineage>
        <taxon>Eukaryota</taxon>
        <taxon>Metazoa</taxon>
        <taxon>Ecdysozoa</taxon>
        <taxon>Arthropoda</taxon>
        <taxon>Hexapoda</taxon>
        <taxon>Insecta</taxon>
        <taxon>Pterygota</taxon>
        <taxon>Neoptera</taxon>
        <taxon>Endopterygota</taxon>
        <taxon>Diptera</taxon>
        <taxon>Brachycera</taxon>
        <taxon>Muscomorpha</taxon>
        <taxon>Ephydroidea</taxon>
        <taxon>Drosophilidae</taxon>
        <taxon>Drosophila</taxon>
    </lineage>
</organism>
<reference evidence="4" key="1">
    <citation type="journal article" date="2007" name="Nature">
        <title>Evolution of genes and genomes on the Drosophila phylogeny.</title>
        <authorList>
            <consortium name="Drosophila 12 genomes consortium"/>
        </authorList>
    </citation>
    <scope>NUCLEOTIDE SEQUENCE [LARGE SCALE GENOMIC DNA]</scope>
    <source>
        <strain evidence="4">Tucson 15010-1051.87</strain>
    </source>
</reference>
<dbReference type="EMBL" id="CH940652">
    <property type="protein sequence ID" value="EDW58936.1"/>
    <property type="molecule type" value="Genomic_DNA"/>
</dbReference>
<dbReference type="RefSeq" id="XP_002055824.1">
    <property type="nucleotide sequence ID" value="XM_002055788.2"/>
</dbReference>
<dbReference type="RefSeq" id="XP_032288753.1">
    <property type="nucleotide sequence ID" value="XM_032432862.2"/>
</dbReference>
<dbReference type="FunCoup" id="B4M5L0">
    <property type="interactions" value="149"/>
</dbReference>
<dbReference type="STRING" id="7244.B4M5L0"/>
<dbReference type="EnsemblMetazoa" id="FBtr0226525">
    <property type="protein sequence ID" value="FBpp0225017"/>
    <property type="gene ID" value="FBgn0197879"/>
</dbReference>
<dbReference type="EnsemblMetazoa" id="XM_032432862.1">
    <property type="protein sequence ID" value="XP_032288753.1"/>
    <property type="gene ID" value="LOC6632439"/>
</dbReference>
<dbReference type="GeneID" id="6632439"/>
<dbReference type="eggNOG" id="ENOG502S7TC">
    <property type="taxonomic scope" value="Eukaryota"/>
</dbReference>
<dbReference type="HOGENOM" id="CLU_076719_0_0_1"/>
<dbReference type="InParanoid" id="B4M5L0"/>
<dbReference type="OMA" id="GANDFHQ"/>
<dbReference type="OrthoDB" id="6367565at2759"/>
<dbReference type="PhylomeDB" id="B4M5L0"/>
<dbReference type="ChiTaRS" id="Jupiter">
    <property type="organism name" value="fly"/>
</dbReference>
<dbReference type="Proteomes" id="UP000008792">
    <property type="component" value="Unassembled WGS sequence"/>
</dbReference>
<dbReference type="GO" id="GO:0005829">
    <property type="term" value="C:cytosol"/>
    <property type="evidence" value="ECO:0000250"/>
    <property type="project" value="UniProtKB"/>
</dbReference>
<dbReference type="GO" id="GO:0005874">
    <property type="term" value="C:microtubule"/>
    <property type="evidence" value="ECO:0007669"/>
    <property type="project" value="UniProtKB-KW"/>
</dbReference>
<dbReference type="GO" id="GO:0005875">
    <property type="term" value="C:microtubule associated complex"/>
    <property type="evidence" value="ECO:0000250"/>
    <property type="project" value="UniProtKB"/>
</dbReference>
<dbReference type="GO" id="GO:0005634">
    <property type="term" value="C:nucleus"/>
    <property type="evidence" value="ECO:0000250"/>
    <property type="project" value="UniProtKB"/>
</dbReference>
<dbReference type="GO" id="GO:0005819">
    <property type="term" value="C:spindle"/>
    <property type="evidence" value="ECO:0007669"/>
    <property type="project" value="UniProtKB-SubCell"/>
</dbReference>
<dbReference type="GO" id="GO:0008017">
    <property type="term" value="F:microtubule binding"/>
    <property type="evidence" value="ECO:0000250"/>
    <property type="project" value="UniProtKB"/>
</dbReference>
<dbReference type="GO" id="GO:0005200">
    <property type="term" value="F:structural constituent of cytoskeleton"/>
    <property type="evidence" value="ECO:0000250"/>
    <property type="project" value="UniProtKB"/>
</dbReference>
<dbReference type="GO" id="GO:0031116">
    <property type="term" value="P:positive regulation of microtubule polymerization"/>
    <property type="evidence" value="ECO:0000250"/>
    <property type="project" value="UniProtKB"/>
</dbReference>
<dbReference type="InterPro" id="IPR033335">
    <property type="entry name" value="JUPITER"/>
</dbReference>
<dbReference type="PANTHER" id="PTHR34930">
    <property type="entry name" value="GEO05313P1"/>
    <property type="match status" value="1"/>
</dbReference>
<dbReference type="PANTHER" id="PTHR34930:SF2">
    <property type="entry name" value="MICROTUBULE-ASSOCIATED PROTEIN JUPITER"/>
    <property type="match status" value="1"/>
</dbReference>
<dbReference type="Pfam" id="PF17054">
    <property type="entry name" value="JUPITER"/>
    <property type="match status" value="2"/>
</dbReference>